<sequence>MVNNMTDLTAHDAAPAWQTRDHLDDPVIGELRNRFGPDAFTVQPTRTGVPVVWVKREQLLEVGDFLKKLPKPYVMLFDLHGMDERLRTHRDGLPAADFSVFYHLISIDRNRDIMLKVALSENDLHLPTFTKLFPNANWYERETWEMFGITFDGHPNLRRIMMPPTWEGHPLRKDYPARATEFDPFELTKAKQDLEMEALTFKPEEWGMKRGTDNEDFMFLNLGPNHPSAHGAFRIILQLDGEEIVDCVPDIGYHHRGAEKMGERQSWHSYIPYTDRIEYLGGCVNEMPYVLAVEKLAGITVPDRVNVIRVMLSELFRINSHLLYISTFIQDVGAMTPVFFAFTDRQKIYDLVEAITGFRMHPAWFRIGGVAHDLPRGWDRLLREFLEWMPKRLDSYEKAALRNTILKGRSVGVAAYTAKEALEWGTTGAGLRATGIDFDVRKWRPYSGYENFDFEVPTGGGVSDCYTRVMLKVEELRQSLRILQQCLDNMPEGPFKADHPLTTPPPKERTLQHIETLITHFLQVSWGPVMPANESFQMIEATKGINSYYLTSDGSTMSYRTRVRTPSFAHLQQIPSAIRGSLVSDLIVYLGSIDFVMSDVDR</sequence>
<proteinExistence type="inferred from homology"/>
<reference key="1">
    <citation type="submission" date="2006-09" db="EMBL/GenBank/DDBJ databases">
        <authorList>
            <consortium name="The Klebsiella pneumonia Genome Sequencing Project"/>
            <person name="McClelland M."/>
            <person name="Sanderson E.K."/>
            <person name="Spieth J."/>
            <person name="Clifton W.S."/>
            <person name="Latreille P."/>
            <person name="Sabo A."/>
            <person name="Pepin K."/>
            <person name="Bhonagiri V."/>
            <person name="Porwollik S."/>
            <person name="Ali J."/>
            <person name="Wilson R.K."/>
        </authorList>
    </citation>
    <scope>NUCLEOTIDE SEQUENCE [LARGE SCALE GENOMIC DNA]</scope>
    <source>
        <strain>ATCC 700721 / MGH 78578</strain>
    </source>
</reference>
<evidence type="ECO:0000255" key="1">
    <source>
        <dbReference type="HAMAP-Rule" id="MF_01359"/>
    </source>
</evidence>
<feature type="chain" id="PRO_0000358648" description="NADH-quinone oxidoreductase subunit C/D">
    <location>
        <begin position="1"/>
        <end position="602"/>
    </location>
</feature>
<feature type="region of interest" description="NADH dehydrogenase I subunit C" evidence="1">
    <location>
        <begin position="1"/>
        <end position="192"/>
    </location>
</feature>
<feature type="region of interest" description="NADH dehydrogenase I subunit D" evidence="1">
    <location>
        <begin position="216"/>
        <end position="602"/>
    </location>
</feature>
<comment type="function">
    <text evidence="1">NDH-1 shuttles electrons from NADH, via FMN and iron-sulfur (Fe-S) centers, to quinones in the respiratory chain. The immediate electron acceptor for the enzyme in this species is believed to be ubiquinone. Couples the redox reaction to proton translocation (for every two electrons transferred, four hydrogen ions are translocated across the cytoplasmic membrane), and thus conserves the redox energy in a proton gradient.</text>
</comment>
<comment type="catalytic activity">
    <reaction evidence="1">
        <text>a quinone + NADH + 5 H(+)(in) = a quinol + NAD(+) + 4 H(+)(out)</text>
        <dbReference type="Rhea" id="RHEA:57888"/>
        <dbReference type="ChEBI" id="CHEBI:15378"/>
        <dbReference type="ChEBI" id="CHEBI:24646"/>
        <dbReference type="ChEBI" id="CHEBI:57540"/>
        <dbReference type="ChEBI" id="CHEBI:57945"/>
        <dbReference type="ChEBI" id="CHEBI:132124"/>
    </reaction>
</comment>
<comment type="subunit">
    <text evidence="1">NDH-1 is composed of 13 different subunits. Subunits NuoB, CD, E, F, and G constitute the peripheral sector of the complex.</text>
</comment>
<comment type="subcellular location">
    <subcellularLocation>
        <location evidence="1">Cell inner membrane</location>
        <topology evidence="1">Peripheral membrane protein</topology>
        <orientation evidence="1">Cytoplasmic side</orientation>
    </subcellularLocation>
</comment>
<comment type="similarity">
    <text evidence="1">In the N-terminal section; belongs to the complex I 30 kDa subunit family.</text>
</comment>
<comment type="similarity">
    <text evidence="1">In the C-terminal section; belongs to the complex I 49 kDa subunit family.</text>
</comment>
<gene>
    <name evidence="1" type="primary">nuoC</name>
    <name evidence="1" type="synonym">nuoCD</name>
    <name evidence="1" type="synonym">nuoD</name>
    <name type="ordered locus">KPN78578_26320</name>
    <name type="ORF">KPN_02676</name>
</gene>
<keyword id="KW-0997">Cell inner membrane</keyword>
<keyword id="KW-1003">Cell membrane</keyword>
<keyword id="KW-0472">Membrane</keyword>
<keyword id="KW-0511">Multifunctional enzyme</keyword>
<keyword id="KW-0520">NAD</keyword>
<keyword id="KW-0874">Quinone</keyword>
<keyword id="KW-1278">Translocase</keyword>
<keyword id="KW-0813">Transport</keyword>
<keyword id="KW-0830">Ubiquinone</keyword>
<protein>
    <recommendedName>
        <fullName evidence="1">NADH-quinone oxidoreductase subunit C/D</fullName>
        <ecNumber evidence="1">7.1.1.-</ecNumber>
    </recommendedName>
    <alternativeName>
        <fullName evidence="1">NADH dehydrogenase I subunit C/D</fullName>
    </alternativeName>
    <alternativeName>
        <fullName evidence="1">NDH-1 subunit C/D</fullName>
    </alternativeName>
</protein>
<name>NUOCD_KLEP7</name>
<organism>
    <name type="scientific">Klebsiella pneumoniae subsp. pneumoniae (strain ATCC 700721 / MGH 78578)</name>
    <dbReference type="NCBI Taxonomy" id="272620"/>
    <lineage>
        <taxon>Bacteria</taxon>
        <taxon>Pseudomonadati</taxon>
        <taxon>Pseudomonadota</taxon>
        <taxon>Gammaproteobacteria</taxon>
        <taxon>Enterobacterales</taxon>
        <taxon>Enterobacteriaceae</taxon>
        <taxon>Klebsiella/Raoultella group</taxon>
        <taxon>Klebsiella</taxon>
        <taxon>Klebsiella pneumoniae complex</taxon>
    </lineage>
</organism>
<dbReference type="EC" id="7.1.1.-" evidence="1"/>
<dbReference type="EMBL" id="CP000647">
    <property type="protein sequence ID" value="ABR78093.1"/>
    <property type="molecule type" value="Genomic_DNA"/>
</dbReference>
<dbReference type="RefSeq" id="WP_002913162.1">
    <property type="nucleotide sequence ID" value="NC_009648.1"/>
</dbReference>
<dbReference type="SMR" id="A6TBX2"/>
<dbReference type="STRING" id="272620.KPN_02676"/>
<dbReference type="jPOST" id="A6TBX2"/>
<dbReference type="PaxDb" id="272620-KPN_02676"/>
<dbReference type="EnsemblBacteria" id="ABR78093">
    <property type="protein sequence ID" value="ABR78093"/>
    <property type="gene ID" value="KPN_02676"/>
</dbReference>
<dbReference type="KEGG" id="kpn:KPN_02676"/>
<dbReference type="HOGENOM" id="CLU_015134_3_2_6"/>
<dbReference type="Proteomes" id="UP000000265">
    <property type="component" value="Chromosome"/>
</dbReference>
<dbReference type="GO" id="GO:0030964">
    <property type="term" value="C:NADH dehydrogenase complex"/>
    <property type="evidence" value="ECO:0007669"/>
    <property type="project" value="InterPro"/>
</dbReference>
<dbReference type="GO" id="GO:0005886">
    <property type="term" value="C:plasma membrane"/>
    <property type="evidence" value="ECO:0007669"/>
    <property type="project" value="UniProtKB-SubCell"/>
</dbReference>
<dbReference type="GO" id="GO:0051287">
    <property type="term" value="F:NAD binding"/>
    <property type="evidence" value="ECO:0007669"/>
    <property type="project" value="InterPro"/>
</dbReference>
<dbReference type="GO" id="GO:0008137">
    <property type="term" value="F:NADH dehydrogenase (ubiquinone) activity"/>
    <property type="evidence" value="ECO:0007669"/>
    <property type="project" value="InterPro"/>
</dbReference>
<dbReference type="GO" id="GO:0050136">
    <property type="term" value="F:NADH:ubiquinone reductase (non-electrogenic) activity"/>
    <property type="evidence" value="ECO:0007669"/>
    <property type="project" value="UniProtKB-UniRule"/>
</dbReference>
<dbReference type="GO" id="GO:0048038">
    <property type="term" value="F:quinone binding"/>
    <property type="evidence" value="ECO:0007669"/>
    <property type="project" value="UniProtKB-KW"/>
</dbReference>
<dbReference type="FunFam" id="1.10.645.10:FF:000001">
    <property type="entry name" value="NADH-quinone oxidoreductase subunit C/D"/>
    <property type="match status" value="1"/>
</dbReference>
<dbReference type="FunFam" id="3.30.460.80:FF:000001">
    <property type="entry name" value="NADH-quinone oxidoreductase subunit C/D"/>
    <property type="match status" value="1"/>
</dbReference>
<dbReference type="Gene3D" id="1.10.645.10">
    <property type="entry name" value="Cytochrome-c3 Hydrogenase, chain B"/>
    <property type="match status" value="1"/>
</dbReference>
<dbReference type="Gene3D" id="3.30.460.80">
    <property type="entry name" value="NADH:ubiquinone oxidoreductase, 30kDa subunit"/>
    <property type="match status" value="1"/>
</dbReference>
<dbReference type="HAMAP" id="MF_01357">
    <property type="entry name" value="NDH1_NuoC"/>
    <property type="match status" value="1"/>
</dbReference>
<dbReference type="HAMAP" id="MF_01359">
    <property type="entry name" value="NDH1_NuoCD_1"/>
    <property type="match status" value="1"/>
</dbReference>
<dbReference type="HAMAP" id="MF_01358">
    <property type="entry name" value="NDH1_NuoD"/>
    <property type="match status" value="1"/>
</dbReference>
<dbReference type="InterPro" id="IPR010218">
    <property type="entry name" value="NADH_DH_suC"/>
</dbReference>
<dbReference type="InterPro" id="IPR023062">
    <property type="entry name" value="NADH_DH_suCD"/>
</dbReference>
<dbReference type="InterPro" id="IPR001135">
    <property type="entry name" value="NADH_Q_OxRdtase_suD"/>
</dbReference>
<dbReference type="InterPro" id="IPR037232">
    <property type="entry name" value="NADH_quin_OxRdtase_su_C/D-like"/>
</dbReference>
<dbReference type="InterPro" id="IPR001268">
    <property type="entry name" value="NADH_UbQ_OxRdtase_30kDa_su"/>
</dbReference>
<dbReference type="InterPro" id="IPR014029">
    <property type="entry name" value="NADH_UbQ_OxRdtase_49kDa_CS"/>
</dbReference>
<dbReference type="InterPro" id="IPR020396">
    <property type="entry name" value="NADH_UbQ_OxRdtase_CS"/>
</dbReference>
<dbReference type="InterPro" id="IPR022885">
    <property type="entry name" value="NDH1_su_D/H"/>
</dbReference>
<dbReference type="InterPro" id="IPR029014">
    <property type="entry name" value="NiFe-Hase_large"/>
</dbReference>
<dbReference type="NCBIfam" id="TIGR01961">
    <property type="entry name" value="NuoC_fam"/>
    <property type="match status" value="1"/>
</dbReference>
<dbReference type="NCBIfam" id="TIGR01962">
    <property type="entry name" value="NuoD"/>
    <property type="match status" value="1"/>
</dbReference>
<dbReference type="NCBIfam" id="NF004739">
    <property type="entry name" value="PRK06075.1"/>
    <property type="match status" value="1"/>
</dbReference>
<dbReference type="NCBIfam" id="NF008728">
    <property type="entry name" value="PRK11742.1"/>
    <property type="match status" value="1"/>
</dbReference>
<dbReference type="PANTHER" id="PTHR11993:SF45">
    <property type="entry name" value="NADH-QUINONE OXIDOREDUCTASE SUBUNIT C_D"/>
    <property type="match status" value="1"/>
</dbReference>
<dbReference type="PANTHER" id="PTHR11993">
    <property type="entry name" value="NADH-UBIQUINONE OXIDOREDUCTASE 49 KDA SUBUNIT"/>
    <property type="match status" value="1"/>
</dbReference>
<dbReference type="Pfam" id="PF00329">
    <property type="entry name" value="Complex1_30kDa"/>
    <property type="match status" value="1"/>
</dbReference>
<dbReference type="Pfam" id="PF00346">
    <property type="entry name" value="Complex1_49kDa"/>
    <property type="match status" value="1"/>
</dbReference>
<dbReference type="SUPFAM" id="SSF56762">
    <property type="entry name" value="HydB/Nqo4-like"/>
    <property type="match status" value="1"/>
</dbReference>
<dbReference type="SUPFAM" id="SSF143243">
    <property type="entry name" value="Nqo5-like"/>
    <property type="match status" value="1"/>
</dbReference>
<dbReference type="PROSITE" id="PS00542">
    <property type="entry name" value="COMPLEX1_30K"/>
    <property type="match status" value="1"/>
</dbReference>
<dbReference type="PROSITE" id="PS00535">
    <property type="entry name" value="COMPLEX1_49K"/>
    <property type="match status" value="1"/>
</dbReference>
<accession>A6TBX2</accession>